<comment type="function">
    <text evidence="2 4">GTPase signaling protein that binds to and hydrolyzes GTP. Regulates signaling pathways involving G-proteins-coupled receptor and heterotrimeric proteins such as GNB1, GNB2 and GNB3. May be involved in selected striatal competencies, mainly locomotor activity and motor coordination.</text>
</comment>
<comment type="subunit">
    <text evidence="1 7">Monomer (Potential). Interacts with PIK3CA and UBE2I. Interacts with GNB1, GNB2 and GNB3 (By similarity).</text>
</comment>
<comment type="subcellular location">
    <subcellularLocation>
        <location evidence="1">Cell membrane</location>
        <topology evidence="1">Lipid-anchor</topology>
    </subcellularLocation>
</comment>
<comment type="tissue specificity">
    <text evidence="2 3">Highly expressed in brain; prominently in the striatum and weakly in kidney, thyroid, lung, heart and testis. Not expressed in liver. Expressed in pancreatic cell lines and in a embryonic stem cell line.</text>
</comment>
<comment type="developmental stage">
    <text evidence="2">Expressed in the brain from 13.5 dpc.</text>
</comment>
<comment type="induction">
    <text evidence="3 5">Down-regulated in hypothyroid conditions and up-regulated by glibenclamide.</text>
</comment>
<comment type="PTM">
    <text evidence="1">Farnesylated. Farnesylation is required for membrane targeting (By similarity).</text>
</comment>
<comment type="disruption phenotype">
    <text evidence="2 4 6">Shows behavioral abnormalities, displaying a gender-dependent increase in anxiety levels and a clear motor coordination deficit and a mild hyperactive phenotype. Mice are more sensitive to D2 receptor stimulation and have decreased body weight.</text>
</comment>
<comment type="similarity">
    <text evidence="7">Belongs to the small GTPase superfamily. RasD family.</text>
</comment>
<comment type="sequence caution" evidence="7">
    <conflict type="miscellaneous discrepancy">
        <sequence resource="EMBL-CDS" id="AAH26377"/>
    </conflict>
    <text>Contaminating sequence.</text>
</comment>
<proteinExistence type="evidence at transcript level"/>
<name>RHES_MOUSE</name>
<dbReference type="EMBL" id="AK015898">
    <property type="protein sequence ID" value="BAB30023.1"/>
    <property type="molecule type" value="mRNA"/>
</dbReference>
<dbReference type="EMBL" id="BC026377">
    <property type="protein sequence ID" value="AAH26377.1"/>
    <property type="status" value="ALT_SEQ"/>
    <property type="molecule type" value="mRNA"/>
</dbReference>
<dbReference type="CCDS" id="CCDS52602.1"/>
<dbReference type="RefSeq" id="NP_083458.1">
    <property type="nucleotide sequence ID" value="NM_029182.2"/>
</dbReference>
<dbReference type="SMR" id="P63032"/>
<dbReference type="BioGRID" id="217250">
    <property type="interactions" value="10"/>
</dbReference>
<dbReference type="FunCoup" id="P63032">
    <property type="interactions" value="559"/>
</dbReference>
<dbReference type="IntAct" id="P63032">
    <property type="interactions" value="1"/>
</dbReference>
<dbReference type="MINT" id="P63032"/>
<dbReference type="STRING" id="10090.ENSMUSP00000118070"/>
<dbReference type="iPTMnet" id="P63032"/>
<dbReference type="PhosphoSitePlus" id="P63032"/>
<dbReference type="PaxDb" id="10090-ENSMUSP00000118070"/>
<dbReference type="ProteomicsDB" id="255257"/>
<dbReference type="Antibodypedia" id="205">
    <property type="antibodies" value="396 antibodies from 33 providers"/>
</dbReference>
<dbReference type="Ensembl" id="ENSMUST00000132133.2">
    <property type="protein sequence ID" value="ENSMUSP00000120717.2"/>
    <property type="gene ID" value="ENSMUSG00000034472.14"/>
</dbReference>
<dbReference type="Ensembl" id="ENSMUST00000139848.8">
    <property type="protein sequence ID" value="ENSMUSP00000118070.2"/>
    <property type="gene ID" value="ENSMUSG00000034472.14"/>
</dbReference>
<dbReference type="GeneID" id="75141"/>
<dbReference type="KEGG" id="mmu:75141"/>
<dbReference type="UCSC" id="uc009mhg.2">
    <property type="organism name" value="mouse"/>
</dbReference>
<dbReference type="AGR" id="MGI:1922391"/>
<dbReference type="CTD" id="23551"/>
<dbReference type="MGI" id="MGI:1922391">
    <property type="gene designation" value="Rasd2"/>
</dbReference>
<dbReference type="VEuPathDB" id="HostDB:ENSMUSG00000034472"/>
<dbReference type="eggNOG" id="KOG0395">
    <property type="taxonomic scope" value="Eukaryota"/>
</dbReference>
<dbReference type="GeneTree" id="ENSGT00940000161129"/>
<dbReference type="HOGENOM" id="CLU_041217_9_3_1"/>
<dbReference type="InParanoid" id="P63032"/>
<dbReference type="OMA" id="CLKNRTK"/>
<dbReference type="OrthoDB" id="265044at2759"/>
<dbReference type="PhylomeDB" id="P63032"/>
<dbReference type="TreeFam" id="TF316238"/>
<dbReference type="BioGRID-ORCS" id="75141">
    <property type="hits" value="2 hits in 78 CRISPR screens"/>
</dbReference>
<dbReference type="PRO" id="PR:P63032"/>
<dbReference type="Proteomes" id="UP000000589">
    <property type="component" value="Chromosome 8"/>
</dbReference>
<dbReference type="RNAct" id="P63032">
    <property type="molecule type" value="protein"/>
</dbReference>
<dbReference type="Bgee" id="ENSMUSG00000034472">
    <property type="expression patterns" value="Expressed in superior frontal gyrus and 125 other cell types or tissues"/>
</dbReference>
<dbReference type="GO" id="GO:0005886">
    <property type="term" value="C:plasma membrane"/>
    <property type="evidence" value="ECO:0000250"/>
    <property type="project" value="UniProtKB"/>
</dbReference>
<dbReference type="GO" id="GO:0045202">
    <property type="term" value="C:synapse"/>
    <property type="evidence" value="ECO:0007669"/>
    <property type="project" value="GOC"/>
</dbReference>
<dbReference type="GO" id="GO:0031681">
    <property type="term" value="F:G-protein beta-subunit binding"/>
    <property type="evidence" value="ECO:0007669"/>
    <property type="project" value="Ensembl"/>
</dbReference>
<dbReference type="GO" id="GO:0005525">
    <property type="term" value="F:GTP binding"/>
    <property type="evidence" value="ECO:0000266"/>
    <property type="project" value="MGI"/>
</dbReference>
<dbReference type="GO" id="GO:0003924">
    <property type="term" value="F:GTPase activity"/>
    <property type="evidence" value="ECO:0007669"/>
    <property type="project" value="InterPro"/>
</dbReference>
<dbReference type="GO" id="GO:0043548">
    <property type="term" value="F:phosphatidylinositol 3-kinase binding"/>
    <property type="evidence" value="ECO:0007669"/>
    <property type="project" value="Ensembl"/>
</dbReference>
<dbReference type="GO" id="GO:0031624">
    <property type="term" value="F:ubiquitin conjugating enzyme binding"/>
    <property type="evidence" value="ECO:0007669"/>
    <property type="project" value="Ensembl"/>
</dbReference>
<dbReference type="GO" id="GO:0007626">
    <property type="term" value="P:locomotory behavior"/>
    <property type="evidence" value="ECO:0000314"/>
    <property type="project" value="UniProtKB"/>
</dbReference>
<dbReference type="GO" id="GO:0031397">
    <property type="term" value="P:negative regulation of protein ubiquitination"/>
    <property type="evidence" value="ECO:0007669"/>
    <property type="project" value="Ensembl"/>
</dbReference>
<dbReference type="GO" id="GO:0051897">
    <property type="term" value="P:positive regulation of phosphatidylinositol 3-kinase/protein kinase B signal transduction"/>
    <property type="evidence" value="ECO:0000250"/>
    <property type="project" value="UniProtKB"/>
</dbReference>
<dbReference type="GO" id="GO:0033235">
    <property type="term" value="P:positive regulation of protein sumoylation"/>
    <property type="evidence" value="ECO:0007669"/>
    <property type="project" value="Ensembl"/>
</dbReference>
<dbReference type="GO" id="GO:0001963">
    <property type="term" value="P:synaptic transmission, dopaminergic"/>
    <property type="evidence" value="ECO:0000315"/>
    <property type="project" value="UniProtKB"/>
</dbReference>
<dbReference type="CDD" id="cd04143">
    <property type="entry name" value="Rhes_like"/>
    <property type="match status" value="1"/>
</dbReference>
<dbReference type="FunFam" id="3.40.50.300:FF:000475">
    <property type="entry name" value="GTP-binding protein Rhes"/>
    <property type="match status" value="1"/>
</dbReference>
<dbReference type="Gene3D" id="3.40.50.300">
    <property type="entry name" value="P-loop containing nucleotide triphosphate hydrolases"/>
    <property type="match status" value="1"/>
</dbReference>
<dbReference type="InterPro" id="IPR027417">
    <property type="entry name" value="P-loop_NTPase"/>
</dbReference>
<dbReference type="InterPro" id="IPR005225">
    <property type="entry name" value="Small_GTP-bd"/>
</dbReference>
<dbReference type="InterPro" id="IPR001806">
    <property type="entry name" value="Small_GTPase"/>
</dbReference>
<dbReference type="InterPro" id="IPR052236">
    <property type="entry name" value="Small_GTPase_RasD"/>
</dbReference>
<dbReference type="NCBIfam" id="TIGR00231">
    <property type="entry name" value="small_GTP"/>
    <property type="match status" value="1"/>
</dbReference>
<dbReference type="PANTHER" id="PTHR46149:SF1">
    <property type="entry name" value="GTP-BINDING PROTEIN RHES"/>
    <property type="match status" value="1"/>
</dbReference>
<dbReference type="PANTHER" id="PTHR46149">
    <property type="entry name" value="MIP08469P"/>
    <property type="match status" value="1"/>
</dbReference>
<dbReference type="Pfam" id="PF00071">
    <property type="entry name" value="Ras"/>
    <property type="match status" value="1"/>
</dbReference>
<dbReference type="PRINTS" id="PR00449">
    <property type="entry name" value="RASTRNSFRMNG"/>
</dbReference>
<dbReference type="SMART" id="SM00175">
    <property type="entry name" value="RAB"/>
    <property type="match status" value="1"/>
</dbReference>
<dbReference type="SMART" id="SM00176">
    <property type="entry name" value="RAN"/>
    <property type="match status" value="1"/>
</dbReference>
<dbReference type="SMART" id="SM00173">
    <property type="entry name" value="RAS"/>
    <property type="match status" value="1"/>
</dbReference>
<dbReference type="SMART" id="SM00174">
    <property type="entry name" value="RHO"/>
    <property type="match status" value="1"/>
</dbReference>
<dbReference type="SUPFAM" id="SSF52540">
    <property type="entry name" value="P-loop containing nucleoside triphosphate hydrolases"/>
    <property type="match status" value="1"/>
</dbReference>
<dbReference type="PROSITE" id="PS51421">
    <property type="entry name" value="RAS"/>
    <property type="match status" value="1"/>
</dbReference>
<feature type="chain" id="PRO_0000082721" description="GTP-binding protein Rhes">
    <location>
        <begin position="1"/>
        <end position="263"/>
    </location>
</feature>
<feature type="propeptide" id="PRO_0000281376" description="Removed in mature form" evidence="1">
    <location>
        <begin position="264"/>
        <end position="266"/>
    </location>
</feature>
<feature type="region of interest" description="Interaction with GNB1, GNB2 and GNB3" evidence="1">
    <location>
        <begin position="189"/>
        <end position="235"/>
    </location>
</feature>
<feature type="short sequence motif" description="Effector region">
    <location>
        <begin position="48"/>
        <end position="56"/>
    </location>
</feature>
<feature type="binding site" evidence="1">
    <location>
        <begin position="26"/>
        <end position="33"/>
    </location>
    <ligand>
        <name>GTP</name>
        <dbReference type="ChEBI" id="CHEBI:37565"/>
    </ligand>
</feature>
<feature type="binding site" evidence="1">
    <location>
        <begin position="73"/>
        <end position="77"/>
    </location>
    <ligand>
        <name>GTP</name>
        <dbReference type="ChEBI" id="CHEBI:37565"/>
    </ligand>
</feature>
<feature type="binding site" evidence="1">
    <location>
        <begin position="140"/>
        <end position="143"/>
    </location>
    <ligand>
        <name>GTP</name>
        <dbReference type="ChEBI" id="CHEBI:37565"/>
    </ligand>
</feature>
<feature type="modified residue" description="Cysteine methyl ester" evidence="1">
    <location>
        <position position="263"/>
    </location>
</feature>
<feature type="lipid moiety-binding region" description="S-farnesyl cysteine" evidence="1">
    <location>
        <position position="263"/>
    </location>
</feature>
<keyword id="KW-0085">Behavior</keyword>
<keyword id="KW-1003">Cell membrane</keyword>
<keyword id="KW-0342">GTP-binding</keyword>
<keyword id="KW-0449">Lipoprotein</keyword>
<keyword id="KW-0472">Membrane</keyword>
<keyword id="KW-0488">Methylation</keyword>
<keyword id="KW-0547">Nucleotide-binding</keyword>
<keyword id="KW-0636">Prenylation</keyword>
<keyword id="KW-1185">Reference proteome</keyword>
<reference key="1">
    <citation type="journal article" date="2005" name="Science">
        <title>The transcriptional landscape of the mammalian genome.</title>
        <authorList>
            <person name="Carninci P."/>
            <person name="Kasukawa T."/>
            <person name="Katayama S."/>
            <person name="Gough J."/>
            <person name="Frith M.C."/>
            <person name="Maeda N."/>
            <person name="Oyama R."/>
            <person name="Ravasi T."/>
            <person name="Lenhard B."/>
            <person name="Wells C."/>
            <person name="Kodzius R."/>
            <person name="Shimokawa K."/>
            <person name="Bajic V.B."/>
            <person name="Brenner S.E."/>
            <person name="Batalov S."/>
            <person name="Forrest A.R."/>
            <person name="Zavolan M."/>
            <person name="Davis M.J."/>
            <person name="Wilming L.G."/>
            <person name="Aidinis V."/>
            <person name="Allen J.E."/>
            <person name="Ambesi-Impiombato A."/>
            <person name="Apweiler R."/>
            <person name="Aturaliya R.N."/>
            <person name="Bailey T.L."/>
            <person name="Bansal M."/>
            <person name="Baxter L."/>
            <person name="Beisel K.W."/>
            <person name="Bersano T."/>
            <person name="Bono H."/>
            <person name="Chalk A.M."/>
            <person name="Chiu K.P."/>
            <person name="Choudhary V."/>
            <person name="Christoffels A."/>
            <person name="Clutterbuck D.R."/>
            <person name="Crowe M.L."/>
            <person name="Dalla E."/>
            <person name="Dalrymple B.P."/>
            <person name="de Bono B."/>
            <person name="Della Gatta G."/>
            <person name="di Bernardo D."/>
            <person name="Down T."/>
            <person name="Engstrom P."/>
            <person name="Fagiolini M."/>
            <person name="Faulkner G."/>
            <person name="Fletcher C.F."/>
            <person name="Fukushima T."/>
            <person name="Furuno M."/>
            <person name="Futaki S."/>
            <person name="Gariboldi M."/>
            <person name="Georgii-Hemming P."/>
            <person name="Gingeras T.R."/>
            <person name="Gojobori T."/>
            <person name="Green R.E."/>
            <person name="Gustincich S."/>
            <person name="Harbers M."/>
            <person name="Hayashi Y."/>
            <person name="Hensch T.K."/>
            <person name="Hirokawa N."/>
            <person name="Hill D."/>
            <person name="Huminiecki L."/>
            <person name="Iacono M."/>
            <person name="Ikeo K."/>
            <person name="Iwama A."/>
            <person name="Ishikawa T."/>
            <person name="Jakt M."/>
            <person name="Kanapin A."/>
            <person name="Katoh M."/>
            <person name="Kawasawa Y."/>
            <person name="Kelso J."/>
            <person name="Kitamura H."/>
            <person name="Kitano H."/>
            <person name="Kollias G."/>
            <person name="Krishnan S.P."/>
            <person name="Kruger A."/>
            <person name="Kummerfeld S.K."/>
            <person name="Kurochkin I.V."/>
            <person name="Lareau L.F."/>
            <person name="Lazarevic D."/>
            <person name="Lipovich L."/>
            <person name="Liu J."/>
            <person name="Liuni S."/>
            <person name="McWilliam S."/>
            <person name="Madan Babu M."/>
            <person name="Madera M."/>
            <person name="Marchionni L."/>
            <person name="Matsuda H."/>
            <person name="Matsuzawa S."/>
            <person name="Miki H."/>
            <person name="Mignone F."/>
            <person name="Miyake S."/>
            <person name="Morris K."/>
            <person name="Mottagui-Tabar S."/>
            <person name="Mulder N."/>
            <person name="Nakano N."/>
            <person name="Nakauchi H."/>
            <person name="Ng P."/>
            <person name="Nilsson R."/>
            <person name="Nishiguchi S."/>
            <person name="Nishikawa S."/>
            <person name="Nori F."/>
            <person name="Ohara O."/>
            <person name="Okazaki Y."/>
            <person name="Orlando V."/>
            <person name="Pang K.C."/>
            <person name="Pavan W.J."/>
            <person name="Pavesi G."/>
            <person name="Pesole G."/>
            <person name="Petrovsky N."/>
            <person name="Piazza S."/>
            <person name="Reed J."/>
            <person name="Reid J.F."/>
            <person name="Ring B.Z."/>
            <person name="Ringwald M."/>
            <person name="Rost B."/>
            <person name="Ruan Y."/>
            <person name="Salzberg S.L."/>
            <person name="Sandelin A."/>
            <person name="Schneider C."/>
            <person name="Schoenbach C."/>
            <person name="Sekiguchi K."/>
            <person name="Semple C.A."/>
            <person name="Seno S."/>
            <person name="Sessa L."/>
            <person name="Sheng Y."/>
            <person name="Shibata Y."/>
            <person name="Shimada H."/>
            <person name="Shimada K."/>
            <person name="Silva D."/>
            <person name="Sinclair B."/>
            <person name="Sperling S."/>
            <person name="Stupka E."/>
            <person name="Sugiura K."/>
            <person name="Sultana R."/>
            <person name="Takenaka Y."/>
            <person name="Taki K."/>
            <person name="Tammoja K."/>
            <person name="Tan S.L."/>
            <person name="Tang S."/>
            <person name="Taylor M.S."/>
            <person name="Tegner J."/>
            <person name="Teichmann S.A."/>
            <person name="Ueda H.R."/>
            <person name="van Nimwegen E."/>
            <person name="Verardo R."/>
            <person name="Wei C.L."/>
            <person name="Yagi K."/>
            <person name="Yamanishi H."/>
            <person name="Zabarovsky E."/>
            <person name="Zhu S."/>
            <person name="Zimmer A."/>
            <person name="Hide W."/>
            <person name="Bult C."/>
            <person name="Grimmond S.M."/>
            <person name="Teasdale R.D."/>
            <person name="Liu E.T."/>
            <person name="Brusic V."/>
            <person name="Quackenbush J."/>
            <person name="Wahlestedt C."/>
            <person name="Mattick J.S."/>
            <person name="Hume D.A."/>
            <person name="Kai C."/>
            <person name="Sasaki D."/>
            <person name="Tomaru Y."/>
            <person name="Fukuda S."/>
            <person name="Kanamori-Katayama M."/>
            <person name="Suzuki M."/>
            <person name="Aoki J."/>
            <person name="Arakawa T."/>
            <person name="Iida J."/>
            <person name="Imamura K."/>
            <person name="Itoh M."/>
            <person name="Kato T."/>
            <person name="Kawaji H."/>
            <person name="Kawagashira N."/>
            <person name="Kawashima T."/>
            <person name="Kojima M."/>
            <person name="Kondo S."/>
            <person name="Konno H."/>
            <person name="Nakano K."/>
            <person name="Ninomiya N."/>
            <person name="Nishio T."/>
            <person name="Okada M."/>
            <person name="Plessy C."/>
            <person name="Shibata K."/>
            <person name="Shiraki T."/>
            <person name="Suzuki S."/>
            <person name="Tagami M."/>
            <person name="Waki K."/>
            <person name="Watahiki A."/>
            <person name="Okamura-Oho Y."/>
            <person name="Suzuki H."/>
            <person name="Kawai J."/>
            <person name="Hayashizaki Y."/>
        </authorList>
    </citation>
    <scope>NUCLEOTIDE SEQUENCE [LARGE SCALE MRNA]</scope>
    <source>
        <strain>C57BL/6J</strain>
        <tissue>Testis</tissue>
    </source>
</reference>
<reference key="2">
    <citation type="journal article" date="2004" name="Genome Res.">
        <title>The status, quality, and expansion of the NIH full-length cDNA project: the Mammalian Gene Collection (MGC).</title>
        <authorList>
            <consortium name="The MGC Project Team"/>
        </authorList>
    </citation>
    <scope>NUCLEOTIDE SEQUENCE [LARGE SCALE MRNA] OF 127-266</scope>
    <source>
        <tissue>Salivary gland</tissue>
    </source>
</reference>
<reference key="3">
    <citation type="journal article" date="2004" name="Mol. Cell. Biol.">
        <title>Rhes is involved in striatal function.</title>
        <authorList>
            <person name="Spano D."/>
            <person name="Branchi I."/>
            <person name="Rosica A."/>
            <person name="Pirro M.T."/>
            <person name="Riccio A."/>
            <person name="Mithbaokar P."/>
            <person name="Affuso A."/>
            <person name="Arra C."/>
            <person name="Campolongo P."/>
            <person name="Terracciano D."/>
            <person name="Macchia V."/>
            <person name="Bernal J."/>
            <person name="Alleva E."/>
            <person name="Di Lauro R."/>
        </authorList>
    </citation>
    <scope>FUNCTION</scope>
    <scope>DISRUPTION PHENOTYPE</scope>
    <scope>TISSUE SPECIFICITY</scope>
    <scope>DEVELOPMENTAL STAGE</scope>
</reference>
<reference key="4">
    <citation type="journal article" date="2006" name="Biochem. Biophys. Res. Commun.">
        <title>Rhes expression in pancreatic beta-cells is regulated by efaroxan in a calcium-dependent process.</title>
        <authorList>
            <person name="Taylor J.P."/>
            <person name="Jackson D.A."/>
            <person name="Morgan N.G."/>
            <person name="Chan S.L."/>
        </authorList>
    </citation>
    <scope>INDUCTION BY EFAROXAN AND GLIBENCLAMIDE</scope>
    <scope>TISSUE SPECIFICITY</scope>
</reference>
<reference key="5">
    <citation type="journal article" date="2008" name="Mol. Cell. Neurosci.">
        <title>The GTP-binding protein Rhes modulates dopamine signalling in striatal medium spiny neurons.</title>
        <authorList>
            <person name="Errico F."/>
            <person name="Santini E."/>
            <person name="Migliarini S."/>
            <person name="Borgkvist A."/>
            <person name="Centonze D."/>
            <person name="Nasti V."/>
            <person name="Carta M."/>
            <person name="De Chiara V."/>
            <person name="Prosperetti C."/>
            <person name="Spano D."/>
            <person name="Herve D."/>
            <person name="Pasqualetti M."/>
            <person name="Di Lauro R."/>
            <person name="Fisone G."/>
            <person name="Usiello A."/>
        </authorList>
    </citation>
    <scope>FUNCTION</scope>
    <scope>DISRUPTION PHENOTYPE</scope>
</reference>
<reference key="6">
    <citation type="journal article" date="2008" name="Neurobiol. Dis.">
        <title>T3 administration in adult hypothyroid mice modulates expression of proteins involved in striatal synaptic plasticity and improves motor behavior.</title>
        <authorList>
            <person name="Vallortigara J."/>
            <person name="Alfos S."/>
            <person name="Micheau J."/>
            <person name="Higueret P."/>
            <person name="Enderlin V."/>
        </authorList>
    </citation>
    <scope>INDUCTION BY HYPOTHYROIDISM</scope>
</reference>
<reference key="7">
    <citation type="journal article" date="2008" name="NeuroReport">
        <title>The Ras homolog Rhes affects dopamine D1 and D2 receptor-mediated behavior in mice.</title>
        <authorList>
            <person name="Quintero G.C."/>
            <person name="Spano D."/>
            <person name="Lahoste G.J."/>
            <person name="Harrison L.M."/>
        </authorList>
    </citation>
    <scope>DISRUPTION PHENOTYPE</scope>
</reference>
<evidence type="ECO:0000250" key="1"/>
<evidence type="ECO:0000269" key="2">
    <source>
    </source>
</evidence>
<evidence type="ECO:0000269" key="3">
    <source>
    </source>
</evidence>
<evidence type="ECO:0000269" key="4">
    <source>
    </source>
</evidence>
<evidence type="ECO:0000269" key="5">
    <source>
    </source>
</evidence>
<evidence type="ECO:0000269" key="6">
    <source>
    </source>
</evidence>
<evidence type="ECO:0000305" key="7"/>
<organism>
    <name type="scientific">Mus musculus</name>
    <name type="common">Mouse</name>
    <dbReference type="NCBI Taxonomy" id="10090"/>
    <lineage>
        <taxon>Eukaryota</taxon>
        <taxon>Metazoa</taxon>
        <taxon>Chordata</taxon>
        <taxon>Craniata</taxon>
        <taxon>Vertebrata</taxon>
        <taxon>Euteleostomi</taxon>
        <taxon>Mammalia</taxon>
        <taxon>Eutheria</taxon>
        <taxon>Euarchontoglires</taxon>
        <taxon>Glires</taxon>
        <taxon>Rodentia</taxon>
        <taxon>Myomorpha</taxon>
        <taxon>Muroidea</taxon>
        <taxon>Muridae</taxon>
        <taxon>Murinae</taxon>
        <taxon>Mus</taxon>
        <taxon>Mus</taxon>
    </lineage>
</organism>
<gene>
    <name type="primary">Rasd2</name>
</gene>
<sequence length="266" mass="30197">MMKTLSSGNCTLNVPAKNSYRMVVLGASRVGKSSIVSRFLNGRFEDQYTPTIEDFHRKVYNIHGDMYQLDILDTSGNHPFPAMRRLSILTGDVFILVFSLDSRESFDEVKRLQKQILEVKSCLKNKTKEAAELPMVICGNKNDHSELCRQVPAMEAELLVSGDENCAYFEVSAKKNTNVNEMFYVLFSMAKLPHEMSPALHHKISVQYGDAFHPRPFCMRRTKVAGAYGMVSPFARRPSVNSDLKYIKAKVLREGQARERDKCSIQ</sequence>
<protein>
    <recommendedName>
        <fullName>GTP-binding protein Rhes</fullName>
    </recommendedName>
    <alternativeName>
        <fullName>Ras homolog enriched in striatum</fullName>
    </alternativeName>
</protein>
<accession>P63032</accession>
<accession>Q9WVD3</accession>